<organism>
    <name type="scientific">Mycoplasma genitalium (strain ATCC 33530 / DSM 19775 / NCTC 10195 / G37)</name>
    <name type="common">Mycoplasmoides genitalium</name>
    <dbReference type="NCBI Taxonomy" id="243273"/>
    <lineage>
        <taxon>Bacteria</taxon>
        <taxon>Bacillati</taxon>
        <taxon>Mycoplasmatota</taxon>
        <taxon>Mycoplasmoidales</taxon>
        <taxon>Mycoplasmoidaceae</taxon>
        <taxon>Mycoplasmoides</taxon>
    </lineage>
</organism>
<sequence length="421" mass="46355">MNIINLINKKQRGKALNLAEINWFVNAVLNKTIADYQITAFLMAIWFKGMNPNELFLLTKAMVDTGEIIKFNHHGKISVDKHSTGGIGDKVSLALVPILTSLGFSVAKLSGRGLGYTGGTIDKLEAVGVKTELTDQQAQACLDKNDCFIIGQSKDIAPVDKVLYGLRDITGTVDSLPLIASSIMSKKLAVMNEYIFIDLKYGKGAFCKTKKIANELAKLMQSIAKSFKRKLSVKLSDMNQVLGKAVGNVIEVNEAVNFLKQDLDQVGQDFIDLMQTIVINILLETKQAKTKQKAIELYQDVLTSKKAWNRFLSFIESQGGNVELFTQKEGFFKPKYKASIKAEKSGILHFTDPIDLAKIGINLGAGRMKKTDQIDPMAGLFLMKKDNESVAVGDTVLNLYSSSPISNEYISAAQKTIIINK</sequence>
<reference key="1">
    <citation type="journal article" date="1995" name="Science">
        <title>The minimal gene complement of Mycoplasma genitalium.</title>
        <authorList>
            <person name="Fraser C.M."/>
            <person name="Gocayne J.D."/>
            <person name="White O."/>
            <person name="Adams M.D."/>
            <person name="Clayton R.A."/>
            <person name="Fleischmann R.D."/>
            <person name="Bult C.J."/>
            <person name="Kerlavage A.R."/>
            <person name="Sutton G.G."/>
            <person name="Kelley J.M."/>
            <person name="Fritchman J.L."/>
            <person name="Weidman J.F."/>
            <person name="Small K.V."/>
            <person name="Sandusky M."/>
            <person name="Fuhrmann J.L."/>
            <person name="Nguyen D.T."/>
            <person name="Utterback T.R."/>
            <person name="Saudek D.M."/>
            <person name="Phillips C.A."/>
            <person name="Merrick J.M."/>
            <person name="Tomb J.-F."/>
            <person name="Dougherty B.A."/>
            <person name="Bott K.F."/>
            <person name="Hu P.-C."/>
            <person name="Lucier T.S."/>
            <person name="Peterson S.N."/>
            <person name="Smith H.O."/>
            <person name="Hutchison C.A. III"/>
            <person name="Venter J.C."/>
        </authorList>
    </citation>
    <scope>NUCLEOTIDE SEQUENCE [LARGE SCALE GENOMIC DNA]</scope>
    <source>
        <strain>ATCC 33530 / DSM 19775 / NCTC 10195 / G37</strain>
    </source>
</reference>
<reference key="2">
    <citation type="journal article" date="1993" name="J. Bacteriol.">
        <title>A survey of the Mycoplasma genitalium genome by using random sequencing.</title>
        <authorList>
            <person name="Peterson S.N."/>
            <person name="Hu P.-C."/>
            <person name="Bott K.F."/>
            <person name="Hutchison C.A. III"/>
        </authorList>
    </citation>
    <scope>NUCLEOTIDE SEQUENCE [GENOMIC DNA] OF 388-421</scope>
    <source>
        <strain>ATCC 33530 / DSM 19775 / NCTC 10195 / G37</strain>
    </source>
</reference>
<evidence type="ECO:0000250" key="1"/>
<evidence type="ECO:0000305" key="2"/>
<keyword id="KW-0328">Glycosyltransferase</keyword>
<keyword id="KW-1185">Reference proteome</keyword>
<keyword id="KW-0808">Transferase</keyword>
<gene>
    <name type="primary">deoA</name>
    <name type="ordered locus">MG051</name>
</gene>
<name>TYPH_MYCGE</name>
<comment type="function">
    <text>The enzymes which catalyze the reversible phosphorolysis of pyrimidine nucleosides are involved in the degradation of these compounds and in their utilization as carbon and energy sources, or in the rescue of pyrimidine bases for nucleotide synthesis.</text>
</comment>
<comment type="catalytic activity">
    <reaction>
        <text>thymidine + phosphate = 2-deoxy-alpha-D-ribose 1-phosphate + thymine</text>
        <dbReference type="Rhea" id="RHEA:16037"/>
        <dbReference type="ChEBI" id="CHEBI:17748"/>
        <dbReference type="ChEBI" id="CHEBI:17821"/>
        <dbReference type="ChEBI" id="CHEBI:43474"/>
        <dbReference type="ChEBI" id="CHEBI:57259"/>
        <dbReference type="EC" id="2.4.2.4"/>
    </reaction>
</comment>
<comment type="subunit">
    <text evidence="1">Homodimer.</text>
</comment>
<comment type="similarity">
    <text evidence="2">Belongs to the thymidine/pyrimidine-nucleoside phosphorylase family.</text>
</comment>
<feature type="chain" id="PRO_0000059078" description="Thymidine phosphorylase">
    <location>
        <begin position="1"/>
        <end position="421"/>
    </location>
</feature>
<feature type="sequence conflict" description="In Ref. 2; AAD12476." evidence="2" ref="2">
    <original>V</original>
    <variation>I</variation>
    <location>
        <position position="392"/>
    </location>
</feature>
<proteinExistence type="inferred from homology"/>
<accession>P47297</accession>
<accession>Q49312</accession>
<dbReference type="EC" id="2.4.2.4"/>
<dbReference type="EMBL" id="L43967">
    <property type="protein sequence ID" value="AAC71267.1"/>
    <property type="molecule type" value="Genomic_DNA"/>
</dbReference>
<dbReference type="EMBL" id="U02191">
    <property type="protein sequence ID" value="AAD12476.1"/>
    <property type="molecule type" value="Genomic_DNA"/>
</dbReference>
<dbReference type="PIR" id="F64205">
    <property type="entry name" value="F64205"/>
</dbReference>
<dbReference type="RefSeq" id="WP_009885713.1">
    <property type="nucleotide sequence ID" value="NC_000908.2"/>
</dbReference>
<dbReference type="SMR" id="P47297"/>
<dbReference type="FunCoup" id="P47297">
    <property type="interactions" value="30"/>
</dbReference>
<dbReference type="STRING" id="243273.MG_051"/>
<dbReference type="GeneID" id="88282167"/>
<dbReference type="KEGG" id="mge:MG_051"/>
<dbReference type="eggNOG" id="COG0213">
    <property type="taxonomic scope" value="Bacteria"/>
</dbReference>
<dbReference type="HOGENOM" id="CLU_025040_0_1_14"/>
<dbReference type="InParanoid" id="P47297"/>
<dbReference type="OrthoDB" id="9763887at2"/>
<dbReference type="BioCyc" id="MGEN243273:G1GJ2-52-MONOMER"/>
<dbReference type="Proteomes" id="UP000000807">
    <property type="component" value="Chromosome"/>
</dbReference>
<dbReference type="GO" id="GO:0005829">
    <property type="term" value="C:cytosol"/>
    <property type="evidence" value="ECO:0000318"/>
    <property type="project" value="GO_Central"/>
</dbReference>
<dbReference type="GO" id="GO:0004645">
    <property type="term" value="F:1,4-alpha-oligoglucan phosphorylase activity"/>
    <property type="evidence" value="ECO:0007669"/>
    <property type="project" value="InterPro"/>
</dbReference>
<dbReference type="GO" id="GO:0009032">
    <property type="term" value="F:thymidine phosphorylase activity"/>
    <property type="evidence" value="ECO:0000318"/>
    <property type="project" value="GO_Central"/>
</dbReference>
<dbReference type="GO" id="GO:0006206">
    <property type="term" value="P:pyrimidine nucleobase metabolic process"/>
    <property type="evidence" value="ECO:0007669"/>
    <property type="project" value="InterPro"/>
</dbReference>
<dbReference type="GO" id="GO:0006213">
    <property type="term" value="P:pyrimidine nucleoside metabolic process"/>
    <property type="evidence" value="ECO:0007669"/>
    <property type="project" value="InterPro"/>
</dbReference>
<dbReference type="FunFam" id="3.40.1030.10:FF:000003">
    <property type="entry name" value="Pyrimidine-nucleoside phosphorylase"/>
    <property type="match status" value="1"/>
</dbReference>
<dbReference type="FunFam" id="3.90.1170.30:FF:000007">
    <property type="entry name" value="Thymidine phosphorylase"/>
    <property type="match status" value="1"/>
</dbReference>
<dbReference type="Gene3D" id="3.40.1030.10">
    <property type="entry name" value="Nucleoside phosphorylase/phosphoribosyltransferase catalytic domain"/>
    <property type="match status" value="1"/>
</dbReference>
<dbReference type="Gene3D" id="3.90.1170.30">
    <property type="entry name" value="Pyrimidine nucleoside phosphorylase-like, C-terminal domain"/>
    <property type="match status" value="1"/>
</dbReference>
<dbReference type="Gene3D" id="1.20.970.10">
    <property type="entry name" value="Transferase, Pyrimidine Nucleoside Phosphorylase, Chain C"/>
    <property type="match status" value="1"/>
</dbReference>
<dbReference type="InterPro" id="IPR000312">
    <property type="entry name" value="Glycosyl_Trfase_fam3"/>
</dbReference>
<dbReference type="InterPro" id="IPR017459">
    <property type="entry name" value="Glycosyl_Trfase_fam3_N_dom"/>
</dbReference>
<dbReference type="InterPro" id="IPR036320">
    <property type="entry name" value="Glycosyl_Trfase_fam3_N_dom_sf"/>
</dbReference>
<dbReference type="InterPro" id="IPR035902">
    <property type="entry name" value="Nuc_phospho_transferase"/>
</dbReference>
<dbReference type="InterPro" id="IPR036566">
    <property type="entry name" value="PYNP-like_C_sf"/>
</dbReference>
<dbReference type="InterPro" id="IPR013102">
    <property type="entry name" value="PYNP_C"/>
</dbReference>
<dbReference type="InterPro" id="IPR018090">
    <property type="entry name" value="Pyrmidine_PPas_bac/euk"/>
</dbReference>
<dbReference type="InterPro" id="IPR017872">
    <property type="entry name" value="Pyrmidine_PPase_CS"/>
</dbReference>
<dbReference type="InterPro" id="IPR000053">
    <property type="entry name" value="Thymidine/pyrmidine_PPase"/>
</dbReference>
<dbReference type="NCBIfam" id="NF004490">
    <property type="entry name" value="PRK05820.1"/>
    <property type="match status" value="1"/>
</dbReference>
<dbReference type="NCBIfam" id="TIGR02644">
    <property type="entry name" value="Y_phosphoryl"/>
    <property type="match status" value="1"/>
</dbReference>
<dbReference type="PANTHER" id="PTHR10515">
    <property type="entry name" value="THYMIDINE PHOSPHORYLASE"/>
    <property type="match status" value="1"/>
</dbReference>
<dbReference type="PANTHER" id="PTHR10515:SF0">
    <property type="entry name" value="THYMIDINE PHOSPHORYLASE"/>
    <property type="match status" value="1"/>
</dbReference>
<dbReference type="Pfam" id="PF02885">
    <property type="entry name" value="Glycos_trans_3N"/>
    <property type="match status" value="1"/>
</dbReference>
<dbReference type="Pfam" id="PF00591">
    <property type="entry name" value="Glycos_transf_3"/>
    <property type="match status" value="1"/>
</dbReference>
<dbReference type="Pfam" id="PF07831">
    <property type="entry name" value="PYNP_C"/>
    <property type="match status" value="1"/>
</dbReference>
<dbReference type="PIRSF" id="PIRSF000478">
    <property type="entry name" value="TP_PyNP"/>
    <property type="match status" value="1"/>
</dbReference>
<dbReference type="SMART" id="SM00941">
    <property type="entry name" value="PYNP_C"/>
    <property type="match status" value="1"/>
</dbReference>
<dbReference type="SUPFAM" id="SSF52418">
    <property type="entry name" value="Nucleoside phosphorylase/phosphoribosyltransferase catalytic domain"/>
    <property type="match status" value="1"/>
</dbReference>
<dbReference type="SUPFAM" id="SSF47648">
    <property type="entry name" value="Nucleoside phosphorylase/phosphoribosyltransferase N-terminal domain"/>
    <property type="match status" value="1"/>
</dbReference>
<dbReference type="SUPFAM" id="SSF54680">
    <property type="entry name" value="Pyrimidine nucleoside phosphorylase C-terminal domain"/>
    <property type="match status" value="1"/>
</dbReference>
<dbReference type="PROSITE" id="PS00647">
    <property type="entry name" value="THYMID_PHOSPHORYLASE"/>
    <property type="match status" value="1"/>
</dbReference>
<protein>
    <recommendedName>
        <fullName>Thymidine phosphorylase</fullName>
        <ecNumber>2.4.2.4</ecNumber>
    </recommendedName>
    <alternativeName>
        <fullName>TdRPase</fullName>
    </alternativeName>
</protein>